<proteinExistence type="inferred from homology"/>
<reference key="1">
    <citation type="journal article" date="2007" name="Genome Res.">
        <title>Lateral gene transfer between obligate intracellular bacteria: evidence from the Rickettsia massiliae genome.</title>
        <authorList>
            <person name="Blanc G."/>
            <person name="Ogata H."/>
            <person name="Robert C."/>
            <person name="Audic S."/>
            <person name="Claverie J.-M."/>
            <person name="Raoult D."/>
        </authorList>
    </citation>
    <scope>NUCLEOTIDE SEQUENCE [LARGE SCALE GENOMIC DNA]</scope>
    <source>
        <strain>Mtu5</strain>
    </source>
</reference>
<keyword id="KW-0031">Aminopeptidase</keyword>
<keyword id="KW-0963">Cytoplasm</keyword>
<keyword id="KW-0378">Hydrolase</keyword>
<keyword id="KW-0464">Manganese</keyword>
<keyword id="KW-0479">Metal-binding</keyword>
<keyword id="KW-0645">Protease</keyword>
<comment type="function">
    <text evidence="1">Presumably involved in the processing and regular turnover of intracellular proteins. Catalyzes the removal of unsubstituted N-terminal amino acids from various peptides.</text>
</comment>
<comment type="catalytic activity">
    <reaction evidence="1">
        <text>Release of an N-terminal amino acid, Xaa-|-Yaa-, in which Xaa is preferably Leu, but may be other amino acids including Pro although not Arg or Lys, and Yaa may be Pro. Amino acid amides and methyl esters are also readily hydrolyzed, but rates on arylamides are exceedingly low.</text>
        <dbReference type="EC" id="3.4.11.1"/>
    </reaction>
</comment>
<comment type="catalytic activity">
    <reaction evidence="1">
        <text>Release of an N-terminal amino acid, preferentially leucine, but not glutamic or aspartic acids.</text>
        <dbReference type="EC" id="3.4.11.10"/>
    </reaction>
</comment>
<comment type="cofactor">
    <cofactor evidence="1">
        <name>Mn(2+)</name>
        <dbReference type="ChEBI" id="CHEBI:29035"/>
    </cofactor>
    <text evidence="1">Binds 2 manganese ions per subunit.</text>
</comment>
<comment type="subcellular location">
    <subcellularLocation>
        <location evidence="1">Cytoplasm</location>
    </subcellularLocation>
</comment>
<comment type="similarity">
    <text evidence="1">Belongs to the peptidase M17 family.</text>
</comment>
<name>AMPA_RICM5</name>
<feature type="chain" id="PRO_1000058390" description="Probable cytosol aminopeptidase">
    <location>
        <begin position="1"/>
        <end position="500"/>
    </location>
</feature>
<feature type="active site" evidence="1">
    <location>
        <position position="277"/>
    </location>
</feature>
<feature type="active site" evidence="1">
    <location>
        <position position="351"/>
    </location>
</feature>
<feature type="binding site" evidence="1">
    <location>
        <position position="265"/>
    </location>
    <ligand>
        <name>Mn(2+)</name>
        <dbReference type="ChEBI" id="CHEBI:29035"/>
        <label>2</label>
    </ligand>
</feature>
<feature type="binding site" evidence="1">
    <location>
        <position position="270"/>
    </location>
    <ligand>
        <name>Mn(2+)</name>
        <dbReference type="ChEBI" id="CHEBI:29035"/>
        <label>1</label>
    </ligand>
</feature>
<feature type="binding site" evidence="1">
    <location>
        <position position="270"/>
    </location>
    <ligand>
        <name>Mn(2+)</name>
        <dbReference type="ChEBI" id="CHEBI:29035"/>
        <label>2</label>
    </ligand>
</feature>
<feature type="binding site" evidence="1">
    <location>
        <position position="288"/>
    </location>
    <ligand>
        <name>Mn(2+)</name>
        <dbReference type="ChEBI" id="CHEBI:29035"/>
        <label>2</label>
    </ligand>
</feature>
<feature type="binding site" evidence="1">
    <location>
        <position position="347"/>
    </location>
    <ligand>
        <name>Mn(2+)</name>
        <dbReference type="ChEBI" id="CHEBI:29035"/>
        <label>1</label>
    </ligand>
</feature>
<feature type="binding site" evidence="1">
    <location>
        <position position="349"/>
    </location>
    <ligand>
        <name>Mn(2+)</name>
        <dbReference type="ChEBI" id="CHEBI:29035"/>
        <label>1</label>
    </ligand>
</feature>
<feature type="binding site" evidence="1">
    <location>
        <position position="349"/>
    </location>
    <ligand>
        <name>Mn(2+)</name>
        <dbReference type="ChEBI" id="CHEBI:29035"/>
        <label>2</label>
    </ligand>
</feature>
<sequence length="500" mass="53873">MLNINFVNEESSTNQGLVVFIDEQLKLDSNLIGLDQQHHGLISKTIQNKLQFTGKYGQIKVIPSVIKSGEVRYLIIAGLGNEEKLTEAKIEELGGKILQHATGCKISTIGLKLTNRISRFTSQTFASLVASGAFLASYRFDKYRTTLKEAEKFAVESIEIFTDNSTETAKLFEIKKLIAEAVFFTRDISNEPSNIKTPQVYAERIVDILEPLGVDVDVIGEREMKNLGMGALLGVGQGSQNESKLVVMEYKGGSKDASTIALVGKGVIFDTGGISLKPSSNMHLMRYDMGGSAAVVGTIIAVAGQKLPINIVGVVGLVENMPSGNAQRPGDVVTTMSGQTAEVLNTDAEGRLVLADAVWYAQEKFKPKCVIDVATLTGAITVALGNTYAGCFSNNDELADKLIKVGEEVNEKLWRMPLHDEYDAMINSDIADMANIGNVPGAAGSCIAAHFIKRFIKDGVDWAHLDIAGVANSNKASALGPKGAVGYGVRLLEKFIKEYT</sequence>
<gene>
    <name evidence="1" type="primary">pepA</name>
    <name type="ordered locus">RMA_0192</name>
</gene>
<organism>
    <name type="scientific">Rickettsia massiliae (strain Mtu5)</name>
    <dbReference type="NCBI Taxonomy" id="416276"/>
    <lineage>
        <taxon>Bacteria</taxon>
        <taxon>Pseudomonadati</taxon>
        <taxon>Pseudomonadota</taxon>
        <taxon>Alphaproteobacteria</taxon>
        <taxon>Rickettsiales</taxon>
        <taxon>Rickettsiaceae</taxon>
        <taxon>Rickettsieae</taxon>
        <taxon>Rickettsia</taxon>
        <taxon>spotted fever group</taxon>
    </lineage>
</organism>
<dbReference type="EC" id="3.4.11.1" evidence="1"/>
<dbReference type="EC" id="3.4.11.10" evidence="1"/>
<dbReference type="EMBL" id="CP000683">
    <property type="protein sequence ID" value="ABV84486.1"/>
    <property type="molecule type" value="Genomic_DNA"/>
</dbReference>
<dbReference type="RefSeq" id="WP_012152464.1">
    <property type="nucleotide sequence ID" value="NC_009900.1"/>
</dbReference>
<dbReference type="SMR" id="A8F0Q0"/>
<dbReference type="MEROPS" id="M17.003"/>
<dbReference type="KEGG" id="rms:RMA_0192"/>
<dbReference type="HOGENOM" id="CLU_013734_6_0_5"/>
<dbReference type="Proteomes" id="UP000001311">
    <property type="component" value="Chromosome"/>
</dbReference>
<dbReference type="GO" id="GO:0005737">
    <property type="term" value="C:cytoplasm"/>
    <property type="evidence" value="ECO:0007669"/>
    <property type="project" value="UniProtKB-SubCell"/>
</dbReference>
<dbReference type="GO" id="GO:0030145">
    <property type="term" value="F:manganese ion binding"/>
    <property type="evidence" value="ECO:0007669"/>
    <property type="project" value="UniProtKB-UniRule"/>
</dbReference>
<dbReference type="GO" id="GO:0070006">
    <property type="term" value="F:metalloaminopeptidase activity"/>
    <property type="evidence" value="ECO:0007669"/>
    <property type="project" value="InterPro"/>
</dbReference>
<dbReference type="GO" id="GO:0006508">
    <property type="term" value="P:proteolysis"/>
    <property type="evidence" value="ECO:0007669"/>
    <property type="project" value="UniProtKB-KW"/>
</dbReference>
<dbReference type="CDD" id="cd00433">
    <property type="entry name" value="Peptidase_M17"/>
    <property type="match status" value="1"/>
</dbReference>
<dbReference type="Gene3D" id="3.40.220.10">
    <property type="entry name" value="Leucine Aminopeptidase, subunit E, domain 1"/>
    <property type="match status" value="1"/>
</dbReference>
<dbReference type="Gene3D" id="3.40.630.10">
    <property type="entry name" value="Zn peptidases"/>
    <property type="match status" value="1"/>
</dbReference>
<dbReference type="HAMAP" id="MF_00181">
    <property type="entry name" value="Cytosol_peptidase_M17"/>
    <property type="match status" value="1"/>
</dbReference>
<dbReference type="InterPro" id="IPR011356">
    <property type="entry name" value="Leucine_aapep/pepB"/>
</dbReference>
<dbReference type="InterPro" id="IPR043472">
    <property type="entry name" value="Macro_dom-like"/>
</dbReference>
<dbReference type="InterPro" id="IPR000819">
    <property type="entry name" value="Peptidase_M17_C"/>
</dbReference>
<dbReference type="InterPro" id="IPR023042">
    <property type="entry name" value="Peptidase_M17_leu_NH2_pept"/>
</dbReference>
<dbReference type="InterPro" id="IPR008283">
    <property type="entry name" value="Peptidase_M17_N"/>
</dbReference>
<dbReference type="NCBIfam" id="NF002073">
    <property type="entry name" value="PRK00913.1-2"/>
    <property type="match status" value="1"/>
</dbReference>
<dbReference type="NCBIfam" id="NF002074">
    <property type="entry name" value="PRK00913.1-4"/>
    <property type="match status" value="1"/>
</dbReference>
<dbReference type="NCBIfam" id="NF002075">
    <property type="entry name" value="PRK00913.2-2"/>
    <property type="match status" value="1"/>
</dbReference>
<dbReference type="NCBIfam" id="NF002077">
    <property type="entry name" value="PRK00913.2-4"/>
    <property type="match status" value="1"/>
</dbReference>
<dbReference type="PANTHER" id="PTHR11963:SF23">
    <property type="entry name" value="CYTOSOL AMINOPEPTIDASE"/>
    <property type="match status" value="1"/>
</dbReference>
<dbReference type="PANTHER" id="PTHR11963">
    <property type="entry name" value="LEUCINE AMINOPEPTIDASE-RELATED"/>
    <property type="match status" value="1"/>
</dbReference>
<dbReference type="Pfam" id="PF00883">
    <property type="entry name" value="Peptidase_M17"/>
    <property type="match status" value="1"/>
</dbReference>
<dbReference type="Pfam" id="PF02789">
    <property type="entry name" value="Peptidase_M17_N"/>
    <property type="match status" value="1"/>
</dbReference>
<dbReference type="PRINTS" id="PR00481">
    <property type="entry name" value="LAMNOPPTDASE"/>
</dbReference>
<dbReference type="SUPFAM" id="SSF52949">
    <property type="entry name" value="Macro domain-like"/>
    <property type="match status" value="1"/>
</dbReference>
<dbReference type="SUPFAM" id="SSF53187">
    <property type="entry name" value="Zn-dependent exopeptidases"/>
    <property type="match status" value="1"/>
</dbReference>
<dbReference type="PROSITE" id="PS00631">
    <property type="entry name" value="CYTOSOL_AP"/>
    <property type="match status" value="1"/>
</dbReference>
<accession>A8F0Q0</accession>
<protein>
    <recommendedName>
        <fullName evidence="1">Probable cytosol aminopeptidase</fullName>
        <ecNumber evidence="1">3.4.11.1</ecNumber>
    </recommendedName>
    <alternativeName>
        <fullName evidence="1">Leucine aminopeptidase</fullName>
        <shortName evidence="1">LAP</shortName>
        <ecNumber evidence="1">3.4.11.10</ecNumber>
    </alternativeName>
    <alternativeName>
        <fullName evidence="1">Leucyl aminopeptidase</fullName>
    </alternativeName>
</protein>
<evidence type="ECO:0000255" key="1">
    <source>
        <dbReference type="HAMAP-Rule" id="MF_00181"/>
    </source>
</evidence>